<organism>
    <name type="scientific">Escherichia coli O127:H6 (strain E2348/69 / EPEC)</name>
    <dbReference type="NCBI Taxonomy" id="574521"/>
    <lineage>
        <taxon>Bacteria</taxon>
        <taxon>Pseudomonadati</taxon>
        <taxon>Pseudomonadota</taxon>
        <taxon>Gammaproteobacteria</taxon>
        <taxon>Enterobacterales</taxon>
        <taxon>Enterobacteriaceae</taxon>
        <taxon>Escherichia</taxon>
    </lineage>
</organism>
<protein>
    <recommendedName>
        <fullName evidence="1">Isopentenyl-diphosphate Delta-isomerase</fullName>
        <shortName evidence="1">IPP isomerase</shortName>
        <ecNumber evidence="1">5.3.3.2</ecNumber>
    </recommendedName>
    <alternativeName>
        <fullName evidence="1">IPP:DMAPP isomerase</fullName>
    </alternativeName>
    <alternativeName>
        <fullName evidence="1">Isopentenyl pyrophosphate isomerase</fullName>
    </alternativeName>
</protein>
<gene>
    <name evidence="1" type="primary">idi</name>
    <name type="ordered locus">E2348C_3142</name>
</gene>
<feature type="chain" id="PRO_1000124555" description="Isopentenyl-diphosphate Delta-isomerase">
    <location>
        <begin position="1"/>
        <end position="182"/>
    </location>
</feature>
<feature type="domain" description="Nudix hydrolase">
    <location>
        <begin position="30"/>
        <end position="164"/>
    </location>
</feature>
<feature type="active site" evidence="1">
    <location>
        <position position="67"/>
    </location>
</feature>
<feature type="active site" evidence="1">
    <location>
        <position position="116"/>
    </location>
</feature>
<feature type="binding site" evidence="1">
    <location>
        <position position="25"/>
    </location>
    <ligand>
        <name>Mn(2+)</name>
        <dbReference type="ChEBI" id="CHEBI:29035"/>
    </ligand>
</feature>
<feature type="binding site" evidence="1">
    <location>
        <position position="32"/>
    </location>
    <ligand>
        <name>Mn(2+)</name>
        <dbReference type="ChEBI" id="CHEBI:29035"/>
    </ligand>
</feature>
<feature type="binding site" evidence="1">
    <location>
        <position position="69"/>
    </location>
    <ligand>
        <name>Mn(2+)</name>
        <dbReference type="ChEBI" id="CHEBI:29035"/>
    </ligand>
</feature>
<feature type="binding site" evidence="1">
    <location>
        <position position="87"/>
    </location>
    <ligand>
        <name>Mg(2+)</name>
        <dbReference type="ChEBI" id="CHEBI:18420"/>
    </ligand>
</feature>
<feature type="binding site" evidence="1">
    <location>
        <position position="114"/>
    </location>
    <ligand>
        <name>Mn(2+)</name>
        <dbReference type="ChEBI" id="CHEBI:29035"/>
    </ligand>
</feature>
<feature type="binding site" evidence="1">
    <location>
        <position position="116"/>
    </location>
    <ligand>
        <name>Mn(2+)</name>
        <dbReference type="ChEBI" id="CHEBI:29035"/>
    </ligand>
</feature>
<comment type="function">
    <text evidence="1">Catalyzes the 1,3-allylic rearrangement of the homoallylic substrate isopentenyl (IPP) to its highly electrophilic allylic isomer, dimethylallyl diphosphate (DMAPP).</text>
</comment>
<comment type="catalytic activity">
    <reaction evidence="1">
        <text>isopentenyl diphosphate = dimethylallyl diphosphate</text>
        <dbReference type="Rhea" id="RHEA:23284"/>
        <dbReference type="ChEBI" id="CHEBI:57623"/>
        <dbReference type="ChEBI" id="CHEBI:128769"/>
        <dbReference type="EC" id="5.3.3.2"/>
    </reaction>
</comment>
<comment type="cofactor">
    <cofactor evidence="1">
        <name>Mg(2+)</name>
        <dbReference type="ChEBI" id="CHEBI:18420"/>
    </cofactor>
    <text evidence="1">Binds 1 Mg(2+) ion per subunit. The magnesium ion binds only when substrate is bound.</text>
</comment>
<comment type="cofactor">
    <cofactor evidence="1">
        <name>Mn(2+)</name>
        <dbReference type="ChEBI" id="CHEBI:29035"/>
    </cofactor>
    <text evidence="1">Binds 1 Mn(2+) ion per subunit.</text>
</comment>
<comment type="pathway">
    <text evidence="1">Isoprenoid biosynthesis; dimethylallyl diphosphate biosynthesis; dimethylallyl diphosphate from isopentenyl diphosphate: step 1/1.</text>
</comment>
<comment type="subunit">
    <text evidence="1">Homodimer.</text>
</comment>
<comment type="subcellular location">
    <subcellularLocation>
        <location evidence="1">Cytoplasm</location>
    </subcellularLocation>
</comment>
<comment type="similarity">
    <text evidence="1">Belongs to the IPP isomerase type 1 family.</text>
</comment>
<dbReference type="EC" id="5.3.3.2" evidence="1"/>
<dbReference type="EMBL" id="FM180568">
    <property type="protein sequence ID" value="CAS10690.1"/>
    <property type="molecule type" value="Genomic_DNA"/>
</dbReference>
<dbReference type="RefSeq" id="WP_001192787.1">
    <property type="nucleotide sequence ID" value="NC_011601.1"/>
</dbReference>
<dbReference type="SMR" id="B7UHT8"/>
<dbReference type="KEGG" id="ecg:E2348C_3142"/>
<dbReference type="HOGENOM" id="CLU_060552_2_0_6"/>
<dbReference type="UniPathway" id="UPA00059">
    <property type="reaction ID" value="UER00104"/>
</dbReference>
<dbReference type="Proteomes" id="UP000008205">
    <property type="component" value="Chromosome"/>
</dbReference>
<dbReference type="GO" id="GO:0005737">
    <property type="term" value="C:cytoplasm"/>
    <property type="evidence" value="ECO:0007669"/>
    <property type="project" value="UniProtKB-SubCell"/>
</dbReference>
<dbReference type="GO" id="GO:0004452">
    <property type="term" value="F:isopentenyl-diphosphate delta-isomerase activity"/>
    <property type="evidence" value="ECO:0007669"/>
    <property type="project" value="UniProtKB-UniRule"/>
</dbReference>
<dbReference type="GO" id="GO:0046872">
    <property type="term" value="F:metal ion binding"/>
    <property type="evidence" value="ECO:0007669"/>
    <property type="project" value="UniProtKB-KW"/>
</dbReference>
<dbReference type="GO" id="GO:0050992">
    <property type="term" value="P:dimethylallyl diphosphate biosynthetic process"/>
    <property type="evidence" value="ECO:0007669"/>
    <property type="project" value="UniProtKB-UniRule"/>
</dbReference>
<dbReference type="GO" id="GO:0008299">
    <property type="term" value="P:isoprenoid biosynthetic process"/>
    <property type="evidence" value="ECO:0007669"/>
    <property type="project" value="UniProtKB-KW"/>
</dbReference>
<dbReference type="CDD" id="cd02885">
    <property type="entry name" value="NUDIX_IPP_Isomerase"/>
    <property type="match status" value="1"/>
</dbReference>
<dbReference type="FunFam" id="3.90.79.10:FF:000009">
    <property type="entry name" value="Isopentenyl-diphosphate Delta-isomerase"/>
    <property type="match status" value="1"/>
</dbReference>
<dbReference type="Gene3D" id="3.90.79.10">
    <property type="entry name" value="Nucleoside Triphosphate Pyrophosphohydrolase"/>
    <property type="match status" value="1"/>
</dbReference>
<dbReference type="HAMAP" id="MF_00202">
    <property type="entry name" value="Idi"/>
    <property type="match status" value="1"/>
</dbReference>
<dbReference type="InterPro" id="IPR056375">
    <property type="entry name" value="Idi_bact"/>
</dbReference>
<dbReference type="InterPro" id="IPR011876">
    <property type="entry name" value="IsopentenylPP_isomerase_typ1"/>
</dbReference>
<dbReference type="InterPro" id="IPR015797">
    <property type="entry name" value="NUDIX_hydrolase-like_dom_sf"/>
</dbReference>
<dbReference type="InterPro" id="IPR000086">
    <property type="entry name" value="NUDIX_hydrolase_dom"/>
</dbReference>
<dbReference type="NCBIfam" id="TIGR02150">
    <property type="entry name" value="IPP_isom_1"/>
    <property type="match status" value="1"/>
</dbReference>
<dbReference type="NCBIfam" id="NF002995">
    <property type="entry name" value="PRK03759.1"/>
    <property type="match status" value="1"/>
</dbReference>
<dbReference type="PANTHER" id="PTHR10885">
    <property type="entry name" value="ISOPENTENYL-DIPHOSPHATE DELTA-ISOMERASE"/>
    <property type="match status" value="1"/>
</dbReference>
<dbReference type="PANTHER" id="PTHR10885:SF0">
    <property type="entry name" value="ISOPENTENYL-DIPHOSPHATE DELTA-ISOMERASE"/>
    <property type="match status" value="1"/>
</dbReference>
<dbReference type="Pfam" id="PF00293">
    <property type="entry name" value="NUDIX"/>
    <property type="match status" value="1"/>
</dbReference>
<dbReference type="PIRSF" id="PIRSF018427">
    <property type="entry name" value="Isopntndiph_ism"/>
    <property type="match status" value="1"/>
</dbReference>
<dbReference type="SUPFAM" id="SSF55811">
    <property type="entry name" value="Nudix"/>
    <property type="match status" value="1"/>
</dbReference>
<dbReference type="PROSITE" id="PS51462">
    <property type="entry name" value="NUDIX"/>
    <property type="match status" value="1"/>
</dbReference>
<reference key="1">
    <citation type="journal article" date="2009" name="J. Bacteriol.">
        <title>Complete genome sequence and comparative genome analysis of enteropathogenic Escherichia coli O127:H6 strain E2348/69.</title>
        <authorList>
            <person name="Iguchi A."/>
            <person name="Thomson N.R."/>
            <person name="Ogura Y."/>
            <person name="Saunders D."/>
            <person name="Ooka T."/>
            <person name="Henderson I.R."/>
            <person name="Harris D."/>
            <person name="Asadulghani M."/>
            <person name="Kurokawa K."/>
            <person name="Dean P."/>
            <person name="Kenny B."/>
            <person name="Quail M.A."/>
            <person name="Thurston S."/>
            <person name="Dougan G."/>
            <person name="Hayashi T."/>
            <person name="Parkhill J."/>
            <person name="Frankel G."/>
        </authorList>
    </citation>
    <scope>NUCLEOTIDE SEQUENCE [LARGE SCALE GENOMIC DNA]</scope>
    <source>
        <strain>E2348/69 / EPEC</strain>
    </source>
</reference>
<evidence type="ECO:0000255" key="1">
    <source>
        <dbReference type="HAMAP-Rule" id="MF_00202"/>
    </source>
</evidence>
<name>IDI_ECO27</name>
<keyword id="KW-0963">Cytoplasm</keyword>
<keyword id="KW-0413">Isomerase</keyword>
<keyword id="KW-0414">Isoprene biosynthesis</keyword>
<keyword id="KW-0460">Magnesium</keyword>
<keyword id="KW-0464">Manganese</keyword>
<keyword id="KW-0479">Metal-binding</keyword>
<keyword id="KW-1185">Reference proteome</keyword>
<proteinExistence type="inferred from homology"/>
<accession>B7UHT8</accession>
<sequence length="182" mass="20322">MQTEHVILLNAQGVPTGTLEKYAAHTADTLLHLAFSSWLFNAKGQLLVTRRALSKKAWPGVWTNSVCGHPQLGESNAEAVIRRCRYELGVEITPPESIYPGFRYRATDPNGIVENEVCPVFAALTTSALQINDDEVMDYQWCDLAAVLRGIDATPWAFSPWMVMQATNREARKRLSAFTQLK</sequence>